<name>QUIP_PSEAE</name>
<gene>
    <name type="primary">quiP</name>
    <name type="ordered locus">PA1032</name>
</gene>
<dbReference type="EC" id="3.5.1.97"/>
<dbReference type="EMBL" id="AE004091">
    <property type="protein sequence ID" value="AAG04421.1"/>
    <property type="molecule type" value="Genomic_DNA"/>
</dbReference>
<dbReference type="PIR" id="F83517">
    <property type="entry name" value="F83517"/>
</dbReference>
<dbReference type="RefSeq" id="NP_249723.1">
    <property type="nucleotide sequence ID" value="NC_002516.2"/>
</dbReference>
<dbReference type="RefSeq" id="WP_003112526.1">
    <property type="nucleotide sequence ID" value="NZ_QZGE01000006.1"/>
</dbReference>
<dbReference type="SMR" id="Q9I4U2"/>
<dbReference type="STRING" id="208964.PA1032"/>
<dbReference type="MEROPS" id="S45.003"/>
<dbReference type="PaxDb" id="208964-PA1032"/>
<dbReference type="GeneID" id="880272"/>
<dbReference type="KEGG" id="pae:PA1032"/>
<dbReference type="PATRIC" id="fig|208964.12.peg.1067"/>
<dbReference type="PseudoCAP" id="PA1032"/>
<dbReference type="HOGENOM" id="CLU_011790_0_1_6"/>
<dbReference type="InParanoid" id="Q9I4U2"/>
<dbReference type="OrthoDB" id="9760084at2"/>
<dbReference type="PhylomeDB" id="Q9I4U2"/>
<dbReference type="BioCyc" id="PAER208964:G1FZ6-1054-MONOMER"/>
<dbReference type="BRENDA" id="3.5.1.97">
    <property type="organism ID" value="5087"/>
</dbReference>
<dbReference type="Proteomes" id="UP000002438">
    <property type="component" value="Chromosome"/>
</dbReference>
<dbReference type="GO" id="GO:0042597">
    <property type="term" value="C:periplasmic space"/>
    <property type="evidence" value="ECO:0007669"/>
    <property type="project" value="UniProtKB-SubCell"/>
</dbReference>
<dbReference type="GO" id="GO:0016811">
    <property type="term" value="F:hydrolase activity, acting on carbon-nitrogen (but not peptide) bonds, in linear amides"/>
    <property type="evidence" value="ECO:0000315"/>
    <property type="project" value="PseudoCAP"/>
</dbReference>
<dbReference type="GO" id="GO:0017000">
    <property type="term" value="P:antibiotic biosynthetic process"/>
    <property type="evidence" value="ECO:0007669"/>
    <property type="project" value="InterPro"/>
</dbReference>
<dbReference type="GO" id="GO:0009372">
    <property type="term" value="P:quorum sensing"/>
    <property type="evidence" value="ECO:0007669"/>
    <property type="project" value="UniProtKB-KW"/>
</dbReference>
<dbReference type="CDD" id="cd03747">
    <property type="entry name" value="Ntn_PGA_like"/>
    <property type="match status" value="1"/>
</dbReference>
<dbReference type="Gene3D" id="1.10.1400.10">
    <property type="match status" value="1"/>
</dbReference>
<dbReference type="Gene3D" id="2.30.120.10">
    <property type="match status" value="1"/>
</dbReference>
<dbReference type="Gene3D" id="3.60.20.10">
    <property type="entry name" value="Glutamine Phosphoribosylpyrophosphate, subunit 1, domain 1"/>
    <property type="match status" value="1"/>
</dbReference>
<dbReference type="Gene3D" id="1.10.439.10">
    <property type="entry name" value="Penicillin Amidohydrolase, domain 1"/>
    <property type="match status" value="1"/>
</dbReference>
<dbReference type="InterPro" id="IPR029055">
    <property type="entry name" value="Ntn_hydrolases_N"/>
</dbReference>
<dbReference type="InterPro" id="IPR014395">
    <property type="entry name" value="Pen/GL7ACA/AHL_acylase"/>
</dbReference>
<dbReference type="InterPro" id="IPR043147">
    <property type="entry name" value="Penicillin_amidase_A-knob"/>
</dbReference>
<dbReference type="InterPro" id="IPR023343">
    <property type="entry name" value="Penicillin_amidase_dom1"/>
</dbReference>
<dbReference type="InterPro" id="IPR043146">
    <property type="entry name" value="Penicillin_amidase_N_B-knob"/>
</dbReference>
<dbReference type="InterPro" id="IPR002692">
    <property type="entry name" value="S45"/>
</dbReference>
<dbReference type="PANTHER" id="PTHR34218:SF4">
    <property type="entry name" value="ACYL-HOMOSERINE LACTONE ACYLASE QUIP"/>
    <property type="match status" value="1"/>
</dbReference>
<dbReference type="PANTHER" id="PTHR34218">
    <property type="entry name" value="PEPTIDASE S45 PENICILLIN AMIDASE"/>
    <property type="match status" value="1"/>
</dbReference>
<dbReference type="Pfam" id="PF01804">
    <property type="entry name" value="Penicil_amidase"/>
    <property type="match status" value="1"/>
</dbReference>
<dbReference type="PIRSF" id="PIRSF001227">
    <property type="entry name" value="Pen_acylase"/>
    <property type="match status" value="1"/>
</dbReference>
<dbReference type="SUPFAM" id="SSF56235">
    <property type="entry name" value="N-terminal nucleophile aminohydrolases (Ntn hydrolases)"/>
    <property type="match status" value="1"/>
</dbReference>
<organism>
    <name type="scientific">Pseudomonas aeruginosa (strain ATCC 15692 / DSM 22644 / CIP 104116 / JCM 14847 / LMG 12228 / 1C / PRS 101 / PAO1)</name>
    <dbReference type="NCBI Taxonomy" id="208964"/>
    <lineage>
        <taxon>Bacteria</taxon>
        <taxon>Pseudomonadati</taxon>
        <taxon>Pseudomonadota</taxon>
        <taxon>Gammaproteobacteria</taxon>
        <taxon>Pseudomonadales</taxon>
        <taxon>Pseudomonadaceae</taxon>
        <taxon>Pseudomonas</taxon>
    </lineage>
</organism>
<accession>Q9I4U2</accession>
<evidence type="ECO:0000250" key="1"/>
<evidence type="ECO:0000255" key="2"/>
<evidence type="ECO:0000269" key="3">
    <source>
    </source>
</evidence>
<evidence type="ECO:0000305" key="4"/>
<sequence>MASPAFMRFLPRCGAAAAFGTLLGLAGCQSWLDDRYADSLPPTSGVQPIKGLAQNVSIRRNALGMPLIETGTFHDALFALGYVHASDRLSQMVSLRLLAQGRLAEMVGPGALEIDRFMRTVNLRQAAEIQYRNASPRLQRFFEVYARGVNAYLYRYRDKLPMDLAQSGYRPEYWKPEDSALVFALLNFGLAVNLQEEIASLTLAQKVGSDKLAWLTPTYPDENLPFDEAEKLKGLRLDGQVPGLAGVEGAARQVAALSMLGVAASNNWAIAPQRSRSGKSLMANDTHLPLSMPSVWNYVQIRSPKYQAAGVSIAGLPGVVAGFNGKLAWGMTMVLGDNQDLYLEQLRRQGNRLYYLADGKWQPTRERQETFFIKGQRPIREVIHETRHGPLLNSALGERKNILQPLPLKSGYGLAYRSIQQEADKTLDGFFDLSRAKTIEQAFDATREIRAMPLNIVFADEKHIGWQVTGRYPNRKEGRGLLPSPGWDGRYDWDGYADPILHPSDQDPQQGWLGTANHRTVQPGYGAQLSNSWYYPERAERIAQLAGASKSHDTQSMIRMQYDQTSLFVAKLQAMFDNPGMALPLRQAIDALPEAQRSRAREAYDRLMAFDGKLTASSSDAALYGAFLHESARQIFLDELGPEDGPAWKAFVETANLSYSAQADHLLGRDDSPFWDDTRTPQKEDKPAILARSLAAAVEFCEQRLGSERKAWQWGKLHTYEWQSDSSKMAPYLGAGERAGLGAIKGYLDRGPYPAGGDHTTLDVSAYGWGQDFDTWLIPAMRLIVDFGQSEPMIGVNSSGQSGNPASPHYADGIDAWLKGRYVSFPFQPQNLDRVYGNKRLTLTPAR</sequence>
<proteinExistence type="evidence at protein level"/>
<reference key="1">
    <citation type="journal article" date="2000" name="Nature">
        <title>Complete genome sequence of Pseudomonas aeruginosa PAO1, an opportunistic pathogen.</title>
        <authorList>
            <person name="Stover C.K."/>
            <person name="Pham X.-Q.T."/>
            <person name="Erwin A.L."/>
            <person name="Mizoguchi S.D."/>
            <person name="Warrener P."/>
            <person name="Hickey M.J."/>
            <person name="Brinkman F.S.L."/>
            <person name="Hufnagle W.O."/>
            <person name="Kowalik D.J."/>
            <person name="Lagrou M."/>
            <person name="Garber R.L."/>
            <person name="Goltry L."/>
            <person name="Tolentino E."/>
            <person name="Westbrock-Wadman S."/>
            <person name="Yuan Y."/>
            <person name="Brody L.L."/>
            <person name="Coulter S.N."/>
            <person name="Folger K.R."/>
            <person name="Kas A."/>
            <person name="Larbig K."/>
            <person name="Lim R.M."/>
            <person name="Smith K.A."/>
            <person name="Spencer D.H."/>
            <person name="Wong G.K.-S."/>
            <person name="Wu Z."/>
            <person name="Paulsen I.T."/>
            <person name="Reizer J."/>
            <person name="Saier M.H. Jr."/>
            <person name="Hancock R.E.W."/>
            <person name="Lory S."/>
            <person name="Olson M.V."/>
        </authorList>
    </citation>
    <scope>NUCLEOTIDE SEQUENCE [LARGE SCALE GENOMIC DNA]</scope>
    <source>
        <strain>ATCC 15692 / DSM 22644 / CIP 104116 / JCM 14847 / LMG 12228 / 1C / PRS 101 / PAO1</strain>
    </source>
</reference>
<reference key="2">
    <citation type="journal article" date="2006" name="Appl. Environ. Microbiol.">
        <title>Identification of QuiP, the product of gene PA1032, as the second acyl-homoserine lactone acylase of Pseudomonas aeruginosa PAO1.</title>
        <authorList>
            <person name="Huang J.J."/>
            <person name="Petersen A."/>
            <person name="Whiteley M."/>
            <person name="Leadbetter J.R."/>
        </authorList>
    </citation>
    <scope>FUNCTION</scope>
    <scope>INDUCTION</scope>
    <scope>IDENTIFICATION BY MASS SPECTROMETRY</scope>
    <source>
        <strain>ATCC 15692 / DSM 22644 / CIP 104116 / JCM 14847 / LMG 12228 / 1C / PRS 101 / PAO1</strain>
    </source>
</reference>
<protein>
    <recommendedName>
        <fullName>Acyl-homoserine lactone acylase QuiP</fullName>
        <shortName>AHL acylase QuiP</shortName>
        <shortName>Acyl-HSL acylase QuiP</shortName>
        <ecNumber>3.5.1.97</ecNumber>
    </recommendedName>
    <alternativeName>
        <fullName>Quorum signal utilization and inactivation protein</fullName>
    </alternativeName>
    <component>
        <recommendedName>
            <fullName>Acyl-homoserine lactone acylase QuiP subunit alpha</fullName>
            <shortName>Acyl-HSL acylase QuiP subunit alpha</shortName>
        </recommendedName>
    </component>
    <component>
        <recommendedName>
            <fullName>Acyl-homoserine lactone acylase QuiP subunit beta</fullName>
            <shortName>Acyl-HSL acylase QuiP subunit beta</shortName>
        </recommendedName>
    </component>
</protein>
<keyword id="KW-0378">Hydrolase</keyword>
<keyword id="KW-0574">Periplasm</keyword>
<keyword id="KW-0673">Quorum sensing</keyword>
<keyword id="KW-1185">Reference proteome</keyword>
<keyword id="KW-0732">Signal</keyword>
<keyword id="KW-0865">Zymogen</keyword>
<comment type="function">
    <text evidence="3">Catalyzes the deacylation of acyl-homoserine lactone (AHL or acyl-HSL), releasing homoserine lactone (HSL) and the corresponding fatty acid. Possesses a specificity for the degradation of long-chain acyl-HSLs (side chains of seven or more carbons in length). Appears to be the acyl-HSL acylase that underlies the ability of P.aeruginosa to degrade and utilize certain acyl-HSLs as growth nutrients, including one of its own quorum signals, 3-oxo-C12-HSL. Is thought to have a role in quorum quenching.</text>
</comment>
<comment type="catalytic activity">
    <reaction>
        <text>an N-acyl-L-homoserine lactone + H2O = L-homoserine lactone + a carboxylate</text>
        <dbReference type="Rhea" id="RHEA:18937"/>
        <dbReference type="ChEBI" id="CHEBI:15377"/>
        <dbReference type="ChEBI" id="CHEBI:29067"/>
        <dbReference type="ChEBI" id="CHEBI:55474"/>
        <dbReference type="ChEBI" id="CHEBI:58633"/>
        <dbReference type="EC" id="3.5.1.97"/>
    </reaction>
</comment>
<comment type="subunit">
    <text evidence="1">Heterodimer of an alpha subunit and a beta subunit processed from the same precursor.</text>
</comment>
<comment type="subcellular location">
    <subcellularLocation>
        <location evidence="4">Periplasm</location>
    </subcellularLocation>
</comment>
<comment type="induction">
    <text evidence="3">By long-chain acyl-HSLs, but not short-chain ones.</text>
</comment>
<comment type="miscellaneous">
    <text>AHL-mediated signaling mediates quorum sensing in many species of Proteobacteria, regulating hundreds of genes, including many that code for extracellular virulence factors.</text>
</comment>
<comment type="similarity">
    <text evidence="4">Belongs to the peptidase S45 family.</text>
</comment>
<feature type="signal peptide" evidence="2">
    <location>
        <begin position="1"/>
        <end position="26"/>
    </location>
</feature>
<feature type="chain" id="PRO_0000253381" description="Acyl-homoserine lactone acylase QuiP">
    <location>
        <begin position="27"/>
        <end position="847"/>
    </location>
</feature>
<feature type="chain" id="PRO_0000253382" description="Acyl-homoserine lactone acylase QuiP subunit alpha">
    <location>
        <begin position="27"/>
        <end status="unknown"/>
    </location>
</feature>
<feature type="propeptide" id="PRO_0000253383" description="Spacer peptide" evidence="1">
    <location>
        <begin status="unknown"/>
        <end position="264"/>
    </location>
</feature>
<feature type="chain" id="PRO_0000253384" description="Acyl-homoserine lactone acylase QuiP subunit beta">
    <location>
        <begin position="265"/>
        <end position="847"/>
    </location>
</feature>
<feature type="active site" description="Nucleophile" evidence="1">
    <location>
        <position position="265"/>
    </location>
</feature>